<organism>
    <name type="scientific">Brucella suis biovar 1 (strain 1330)</name>
    <dbReference type="NCBI Taxonomy" id="204722"/>
    <lineage>
        <taxon>Bacteria</taxon>
        <taxon>Pseudomonadati</taxon>
        <taxon>Pseudomonadota</taxon>
        <taxon>Alphaproteobacteria</taxon>
        <taxon>Hyphomicrobiales</taxon>
        <taxon>Brucellaceae</taxon>
        <taxon>Brucella/Ochrobactrum group</taxon>
        <taxon>Brucella</taxon>
    </lineage>
</organism>
<protein>
    <recommendedName>
        <fullName evidence="1">Integration host factor subunit beta</fullName>
        <shortName evidence="1">IHF-beta</shortName>
    </recommendedName>
</protein>
<proteinExistence type="inferred from homology"/>
<dbReference type="EMBL" id="AE014291">
    <property type="protein sequence ID" value="AAN29106.1"/>
    <property type="molecule type" value="Genomic_DNA"/>
</dbReference>
<dbReference type="EMBL" id="CP002997">
    <property type="protein sequence ID" value="AEM17518.1"/>
    <property type="molecule type" value="Genomic_DNA"/>
</dbReference>
<dbReference type="RefSeq" id="WP_004687882.1">
    <property type="nucleotide sequence ID" value="NZ_KN046804.1"/>
</dbReference>
<dbReference type="SMR" id="Q8G304"/>
<dbReference type="KEGG" id="bms:BR0153"/>
<dbReference type="KEGG" id="bsi:BS1330_I0153"/>
<dbReference type="PATRIC" id="fig|204722.22.peg.1678"/>
<dbReference type="HOGENOM" id="CLU_105066_2_0_5"/>
<dbReference type="Proteomes" id="UP000007104">
    <property type="component" value="Chromosome I"/>
</dbReference>
<dbReference type="GO" id="GO:0005694">
    <property type="term" value="C:chromosome"/>
    <property type="evidence" value="ECO:0007669"/>
    <property type="project" value="InterPro"/>
</dbReference>
<dbReference type="GO" id="GO:0005829">
    <property type="term" value="C:cytosol"/>
    <property type="evidence" value="ECO:0007669"/>
    <property type="project" value="TreeGrafter"/>
</dbReference>
<dbReference type="GO" id="GO:0003677">
    <property type="term" value="F:DNA binding"/>
    <property type="evidence" value="ECO:0007669"/>
    <property type="project" value="UniProtKB-UniRule"/>
</dbReference>
<dbReference type="GO" id="GO:0030527">
    <property type="term" value="F:structural constituent of chromatin"/>
    <property type="evidence" value="ECO:0007669"/>
    <property type="project" value="InterPro"/>
</dbReference>
<dbReference type="GO" id="GO:0006310">
    <property type="term" value="P:DNA recombination"/>
    <property type="evidence" value="ECO:0007669"/>
    <property type="project" value="UniProtKB-UniRule"/>
</dbReference>
<dbReference type="GO" id="GO:0006355">
    <property type="term" value="P:regulation of DNA-templated transcription"/>
    <property type="evidence" value="ECO:0007669"/>
    <property type="project" value="UniProtKB-UniRule"/>
</dbReference>
<dbReference type="GO" id="GO:0006417">
    <property type="term" value="P:regulation of translation"/>
    <property type="evidence" value="ECO:0007669"/>
    <property type="project" value="UniProtKB-UniRule"/>
</dbReference>
<dbReference type="CDD" id="cd13836">
    <property type="entry name" value="IHF_B"/>
    <property type="match status" value="1"/>
</dbReference>
<dbReference type="Gene3D" id="4.10.520.10">
    <property type="entry name" value="IHF-like DNA-binding proteins"/>
    <property type="match status" value="1"/>
</dbReference>
<dbReference type="HAMAP" id="MF_00381">
    <property type="entry name" value="IHF_beta"/>
    <property type="match status" value="1"/>
</dbReference>
<dbReference type="InterPro" id="IPR000119">
    <property type="entry name" value="Hist_DNA-bd"/>
</dbReference>
<dbReference type="InterPro" id="IPR020816">
    <property type="entry name" value="Histone-like_DNA-bd_CS"/>
</dbReference>
<dbReference type="InterPro" id="IPR010992">
    <property type="entry name" value="IHF-like_DNA-bd_dom_sf"/>
</dbReference>
<dbReference type="InterPro" id="IPR005685">
    <property type="entry name" value="IHF_beta"/>
</dbReference>
<dbReference type="NCBIfam" id="TIGR00988">
    <property type="entry name" value="hip"/>
    <property type="match status" value="1"/>
</dbReference>
<dbReference type="NCBIfam" id="NF001222">
    <property type="entry name" value="PRK00199.1"/>
    <property type="match status" value="1"/>
</dbReference>
<dbReference type="PANTHER" id="PTHR33175">
    <property type="entry name" value="DNA-BINDING PROTEIN HU"/>
    <property type="match status" value="1"/>
</dbReference>
<dbReference type="PANTHER" id="PTHR33175:SF5">
    <property type="entry name" value="INTEGRATION HOST FACTOR SUBUNIT BETA"/>
    <property type="match status" value="1"/>
</dbReference>
<dbReference type="Pfam" id="PF00216">
    <property type="entry name" value="Bac_DNA_binding"/>
    <property type="match status" value="1"/>
</dbReference>
<dbReference type="PRINTS" id="PR01727">
    <property type="entry name" value="DNABINDINGHU"/>
</dbReference>
<dbReference type="SMART" id="SM00411">
    <property type="entry name" value="BHL"/>
    <property type="match status" value="1"/>
</dbReference>
<dbReference type="SUPFAM" id="SSF47729">
    <property type="entry name" value="IHF-like DNA-binding proteins"/>
    <property type="match status" value="1"/>
</dbReference>
<dbReference type="PROSITE" id="PS00045">
    <property type="entry name" value="HISTONE_LIKE"/>
    <property type="match status" value="1"/>
</dbReference>
<keyword id="KW-0233">DNA recombination</keyword>
<keyword id="KW-0238">DNA-binding</keyword>
<keyword id="KW-0804">Transcription</keyword>
<keyword id="KW-0805">Transcription regulation</keyword>
<keyword id="KW-0810">Translation regulation</keyword>
<comment type="function">
    <text evidence="1">This protein is one of the two subunits of integration host factor, a specific DNA-binding protein that functions in genetic recombination as well as in transcriptional and translational control.</text>
</comment>
<comment type="subunit">
    <text evidence="1">Heterodimer of an alpha and a beta chain.</text>
</comment>
<comment type="similarity">
    <text evidence="1">Belongs to the bacterial histone-like protein family.</text>
</comment>
<reference key="1">
    <citation type="journal article" date="2002" name="Proc. Natl. Acad. Sci. U.S.A.">
        <title>The Brucella suis genome reveals fundamental similarities between animal and plant pathogens and symbionts.</title>
        <authorList>
            <person name="Paulsen I.T."/>
            <person name="Seshadri R."/>
            <person name="Nelson K.E."/>
            <person name="Eisen J.A."/>
            <person name="Heidelberg J.F."/>
            <person name="Read T.D."/>
            <person name="Dodson R.J."/>
            <person name="Umayam L.A."/>
            <person name="Brinkac L.M."/>
            <person name="Beanan M.J."/>
            <person name="Daugherty S.C."/>
            <person name="DeBoy R.T."/>
            <person name="Durkin A.S."/>
            <person name="Kolonay J.F."/>
            <person name="Madupu R."/>
            <person name="Nelson W.C."/>
            <person name="Ayodeji B."/>
            <person name="Kraul M."/>
            <person name="Shetty J."/>
            <person name="Malek J.A."/>
            <person name="Van Aken S.E."/>
            <person name="Riedmuller S."/>
            <person name="Tettelin H."/>
            <person name="Gill S.R."/>
            <person name="White O."/>
            <person name="Salzberg S.L."/>
            <person name="Hoover D.L."/>
            <person name="Lindler L.E."/>
            <person name="Halling S.M."/>
            <person name="Boyle S.M."/>
            <person name="Fraser C.M."/>
        </authorList>
    </citation>
    <scope>NUCLEOTIDE SEQUENCE [LARGE SCALE GENOMIC DNA]</scope>
    <source>
        <strain>1330</strain>
    </source>
</reference>
<reference key="2">
    <citation type="journal article" date="2011" name="J. Bacteriol.">
        <title>Revised genome sequence of Brucella suis 1330.</title>
        <authorList>
            <person name="Tae H."/>
            <person name="Shallom S."/>
            <person name="Settlage R."/>
            <person name="Preston D."/>
            <person name="Adams L.G."/>
            <person name="Garner H.R."/>
        </authorList>
    </citation>
    <scope>NUCLEOTIDE SEQUENCE [LARGE SCALE GENOMIC DNA]</scope>
    <source>
        <strain>1330</strain>
    </source>
</reference>
<sequence>MIKSELVQIIASRNPHLFQRDVENIVGAVFDEITNALAEGNRVELRGFGAFSVKNRPARSGRNPRTGETVDVEEKWVPFFKTGKELRDRLNGAV</sequence>
<gene>
    <name evidence="1" type="primary">ihfB</name>
    <name evidence="1" type="synonym">himD</name>
    <name type="ordered locus">BR0153</name>
    <name type="ordered locus">BS1330_I0153</name>
</gene>
<name>IHFB_BRUSU</name>
<feature type="chain" id="PRO_0000105044" description="Integration host factor subunit beta">
    <location>
        <begin position="1"/>
        <end position="94"/>
    </location>
</feature>
<evidence type="ECO:0000255" key="1">
    <source>
        <dbReference type="HAMAP-Rule" id="MF_00381"/>
    </source>
</evidence>
<accession>Q8G304</accession>
<accession>G0KBC6</accession>